<sequence length="660" mass="74230">MKTVVFAYHDMGCLGIEALLAAGYEISAIFTHTDNPGEKAFYGSVARLAAERGIPVYAPDDVNHPLWVERIAQLSPDVIFSFYYRHLICDEILQLAPAGAFNLHGSLLPKYRGRAPLNWVLVNGETETGVTLHRMVKRADAGAIVAQLRIAIAPDDIAITLHHKLCHAARQLLEQTLPAIKHGNILEIAQRENEATCFGRRTPDDSFLEWHKPASVLHNMVRAVADPWPGAFSYVGNQKFTVWSSRVHPHASKAQPGSVISVAPLLIACGDGALEIVTGQAGDGITMQGSQLAQTLGLVQGSRLNSQPACTARRRTRVLILGVNGFIGNHLTERLLREDHYEVYGLDIGSDAISRFLNHPHFHFVEGDISIHSEWIEYHVKKCDVVLPLVAIATPIEYTRNPLRVFELDFEENLRIIRYCVKYRKRIIFPSTSEVYGMCSDKYFDEDHSNLIVGPVNKPRWIYSVSKQLLDRVIWAYGEKEGLQFTLFRPFNWMGPRLDNLNAARIGSSRAITQLILNLVEGSPIKLIDGGKQKRCFTDIRDGIEALYRIIENAGNRCDGEIINIGNPENEASIEELGEMLLASFEKHPLRHHFPPFAGFRVVESSSYYGKGYQDVEHRKPSIRNAHRCLDWEPKIDMQETIDETLDFFLRTVDLTDKPS</sequence>
<evidence type="ECO:0000255" key="1">
    <source>
        <dbReference type="HAMAP-Rule" id="MF_01166"/>
    </source>
</evidence>
<proteinExistence type="inferred from homology"/>
<gene>
    <name evidence="1" type="primary">arnA</name>
    <name type="ordered locus">EcE24377A_2550</name>
</gene>
<reference key="1">
    <citation type="journal article" date="2008" name="J. Bacteriol.">
        <title>The pangenome structure of Escherichia coli: comparative genomic analysis of E. coli commensal and pathogenic isolates.</title>
        <authorList>
            <person name="Rasko D.A."/>
            <person name="Rosovitz M.J."/>
            <person name="Myers G.S.A."/>
            <person name="Mongodin E.F."/>
            <person name="Fricke W.F."/>
            <person name="Gajer P."/>
            <person name="Crabtree J."/>
            <person name="Sebaihia M."/>
            <person name="Thomson N.R."/>
            <person name="Chaudhuri R."/>
            <person name="Henderson I.R."/>
            <person name="Sperandio V."/>
            <person name="Ravel J."/>
        </authorList>
    </citation>
    <scope>NUCLEOTIDE SEQUENCE [LARGE SCALE GENOMIC DNA]</scope>
    <source>
        <strain>E24377A / ETEC</strain>
    </source>
</reference>
<protein>
    <recommendedName>
        <fullName evidence="1">Bifunctional polymyxin resistance protein ArnA</fullName>
    </recommendedName>
    <domain>
        <recommendedName>
            <fullName evidence="1">UDP-4-amino-4-deoxy-L-arabinose formyltransferase</fullName>
            <ecNumber evidence="1">2.1.2.13</ecNumber>
        </recommendedName>
        <alternativeName>
            <fullName evidence="1">ArnAFT</fullName>
        </alternativeName>
        <alternativeName>
            <fullName evidence="1">UDP-L-Ara4N formyltransferase</fullName>
        </alternativeName>
    </domain>
    <domain>
        <recommendedName>
            <fullName evidence="1">UDP-glucuronic acid oxidase, UDP-4-keto-hexauronic acid decarboxylating</fullName>
            <ecNumber evidence="1">1.1.1.305</ecNumber>
        </recommendedName>
        <alternativeName>
            <fullName evidence="1">ArnADH</fullName>
        </alternativeName>
        <alternativeName>
            <fullName evidence="1">UDP-GlcUA decarboxylase</fullName>
        </alternativeName>
        <alternativeName>
            <fullName evidence="1">UDP-glucuronic acid dehydrogenase</fullName>
        </alternativeName>
    </domain>
</protein>
<name>ARNA_ECO24</name>
<keyword id="KW-0046">Antibiotic resistance</keyword>
<keyword id="KW-0441">Lipid A biosynthesis</keyword>
<keyword id="KW-0444">Lipid biosynthesis</keyword>
<keyword id="KW-0443">Lipid metabolism</keyword>
<keyword id="KW-0448">Lipopolysaccharide biosynthesis</keyword>
<keyword id="KW-0511">Multifunctional enzyme</keyword>
<keyword id="KW-0520">NAD</keyword>
<keyword id="KW-0560">Oxidoreductase</keyword>
<keyword id="KW-1185">Reference proteome</keyword>
<keyword id="KW-0808">Transferase</keyword>
<dbReference type="EC" id="2.1.2.13" evidence="1"/>
<dbReference type="EC" id="1.1.1.305" evidence="1"/>
<dbReference type="EMBL" id="CP000800">
    <property type="protein sequence ID" value="ABV20776.1"/>
    <property type="molecule type" value="Genomic_DNA"/>
</dbReference>
<dbReference type="RefSeq" id="WP_000860259.1">
    <property type="nucleotide sequence ID" value="NC_009801.1"/>
</dbReference>
<dbReference type="SMR" id="A7ZP73"/>
<dbReference type="KEGG" id="ecw:EcE24377A_2550"/>
<dbReference type="HOGENOM" id="CLU_007383_23_2_6"/>
<dbReference type="UniPathway" id="UPA00030"/>
<dbReference type="UniPathway" id="UPA00032">
    <property type="reaction ID" value="UER00492"/>
</dbReference>
<dbReference type="UniPathway" id="UPA00032">
    <property type="reaction ID" value="UER00494"/>
</dbReference>
<dbReference type="Proteomes" id="UP000001122">
    <property type="component" value="Chromosome"/>
</dbReference>
<dbReference type="GO" id="GO:0016020">
    <property type="term" value="C:membrane"/>
    <property type="evidence" value="ECO:0007669"/>
    <property type="project" value="GOC"/>
</dbReference>
<dbReference type="GO" id="GO:0016831">
    <property type="term" value="F:carboxy-lyase activity"/>
    <property type="evidence" value="ECO:0007669"/>
    <property type="project" value="InterPro"/>
</dbReference>
<dbReference type="GO" id="GO:0099619">
    <property type="term" value="F:UDP-4-amino-4-deoxy-L-arabinose formyltransferase activity"/>
    <property type="evidence" value="ECO:0007669"/>
    <property type="project" value="UniProtKB-EC"/>
</dbReference>
<dbReference type="GO" id="GO:0099618">
    <property type="term" value="F:UDP-glucuronate dehydrogenase activity"/>
    <property type="evidence" value="ECO:0007669"/>
    <property type="project" value="UniProtKB-EC"/>
</dbReference>
<dbReference type="GO" id="GO:0009245">
    <property type="term" value="P:lipid A biosynthetic process"/>
    <property type="evidence" value="ECO:0007669"/>
    <property type="project" value="UniProtKB-KW"/>
</dbReference>
<dbReference type="GO" id="GO:0009103">
    <property type="term" value="P:lipopolysaccharide biosynthetic process"/>
    <property type="evidence" value="ECO:0007669"/>
    <property type="project" value="UniProtKB-UniRule"/>
</dbReference>
<dbReference type="GO" id="GO:0046677">
    <property type="term" value="P:response to antibiotic"/>
    <property type="evidence" value="ECO:0007669"/>
    <property type="project" value="UniProtKB-KW"/>
</dbReference>
<dbReference type="CDD" id="cd08702">
    <property type="entry name" value="Arna_FMT_C"/>
    <property type="match status" value="1"/>
</dbReference>
<dbReference type="CDD" id="cd05257">
    <property type="entry name" value="Arna_like_SDR_e"/>
    <property type="match status" value="1"/>
</dbReference>
<dbReference type="CDD" id="cd08644">
    <property type="entry name" value="FMT_core_ArnA_N"/>
    <property type="match status" value="1"/>
</dbReference>
<dbReference type="FunFam" id="3.40.50.12230:FF:000002">
    <property type="entry name" value="Bifunctional polymyxin resistance protein ArnA"/>
    <property type="match status" value="1"/>
</dbReference>
<dbReference type="FunFam" id="3.40.50.720:FF:000197">
    <property type="entry name" value="Bifunctional polymyxin resistance protein ArnA"/>
    <property type="match status" value="1"/>
</dbReference>
<dbReference type="Gene3D" id="3.40.50.12230">
    <property type="match status" value="1"/>
</dbReference>
<dbReference type="Gene3D" id="3.40.50.720">
    <property type="entry name" value="NAD(P)-binding Rossmann-like Domain"/>
    <property type="match status" value="1"/>
</dbReference>
<dbReference type="HAMAP" id="MF_01166">
    <property type="entry name" value="ArnA"/>
    <property type="match status" value="1"/>
</dbReference>
<dbReference type="InterPro" id="IPR045869">
    <property type="entry name" value="Arna-like_SDR_e"/>
</dbReference>
<dbReference type="InterPro" id="IPR021168">
    <property type="entry name" value="Bifun_polymyxin_resist_ArnA"/>
</dbReference>
<dbReference type="InterPro" id="IPR001509">
    <property type="entry name" value="Epimerase_deHydtase"/>
</dbReference>
<dbReference type="InterPro" id="IPR005793">
    <property type="entry name" value="Formyl_trans_C"/>
</dbReference>
<dbReference type="InterPro" id="IPR002376">
    <property type="entry name" value="Formyl_transf_N"/>
</dbReference>
<dbReference type="InterPro" id="IPR036477">
    <property type="entry name" value="Formyl_transf_N_sf"/>
</dbReference>
<dbReference type="InterPro" id="IPR011034">
    <property type="entry name" value="Formyl_transferase-like_C_sf"/>
</dbReference>
<dbReference type="InterPro" id="IPR050177">
    <property type="entry name" value="Lipid_A_modif_metabolic_enz"/>
</dbReference>
<dbReference type="InterPro" id="IPR036291">
    <property type="entry name" value="NAD(P)-bd_dom_sf"/>
</dbReference>
<dbReference type="NCBIfam" id="NF005414">
    <property type="entry name" value="PRK06988.1"/>
    <property type="match status" value="1"/>
</dbReference>
<dbReference type="NCBIfam" id="NF005998">
    <property type="entry name" value="PRK08125.1"/>
    <property type="match status" value="1"/>
</dbReference>
<dbReference type="NCBIfam" id="NF008872">
    <property type="entry name" value="PRK11908.1"/>
    <property type="match status" value="1"/>
</dbReference>
<dbReference type="PANTHER" id="PTHR43245">
    <property type="entry name" value="BIFUNCTIONAL POLYMYXIN RESISTANCE PROTEIN ARNA"/>
    <property type="match status" value="1"/>
</dbReference>
<dbReference type="PANTHER" id="PTHR43245:SF13">
    <property type="entry name" value="UDP-D-APIOSE_UDP-D-XYLOSE SYNTHASE 2"/>
    <property type="match status" value="1"/>
</dbReference>
<dbReference type="Pfam" id="PF01370">
    <property type="entry name" value="Epimerase"/>
    <property type="match status" value="1"/>
</dbReference>
<dbReference type="Pfam" id="PF02911">
    <property type="entry name" value="Formyl_trans_C"/>
    <property type="match status" value="1"/>
</dbReference>
<dbReference type="Pfam" id="PF00551">
    <property type="entry name" value="Formyl_trans_N"/>
    <property type="match status" value="1"/>
</dbReference>
<dbReference type="PIRSF" id="PIRSF036506">
    <property type="entry name" value="Bifun_polymyxin_resist_ArnA"/>
    <property type="match status" value="1"/>
</dbReference>
<dbReference type="SUPFAM" id="SSF50486">
    <property type="entry name" value="FMT C-terminal domain-like"/>
    <property type="match status" value="1"/>
</dbReference>
<dbReference type="SUPFAM" id="SSF53328">
    <property type="entry name" value="Formyltransferase"/>
    <property type="match status" value="1"/>
</dbReference>
<dbReference type="SUPFAM" id="SSF51735">
    <property type="entry name" value="NAD(P)-binding Rossmann-fold domains"/>
    <property type="match status" value="1"/>
</dbReference>
<comment type="function">
    <text evidence="1">Bifunctional enzyme that catalyzes the oxidative decarboxylation of UDP-glucuronic acid (UDP-GlcUA) to UDP-4-keto-arabinose (UDP-Ara4O) and the addition of a formyl group to UDP-4-amino-4-deoxy-L-arabinose (UDP-L-Ara4N) to form UDP-L-4-formamido-arabinose (UDP-L-Ara4FN). The modified arabinose is attached to lipid A and is required for resistance to polymyxin and cationic antimicrobial peptides.</text>
</comment>
<comment type="catalytic activity">
    <reaction evidence="1">
        <text>UDP-alpha-D-glucuronate + NAD(+) = UDP-beta-L-threo-pentopyranos-4-ulose + CO2 + NADH</text>
        <dbReference type="Rhea" id="RHEA:24702"/>
        <dbReference type="ChEBI" id="CHEBI:16526"/>
        <dbReference type="ChEBI" id="CHEBI:57540"/>
        <dbReference type="ChEBI" id="CHEBI:57945"/>
        <dbReference type="ChEBI" id="CHEBI:58052"/>
        <dbReference type="ChEBI" id="CHEBI:58710"/>
        <dbReference type="EC" id="1.1.1.305"/>
    </reaction>
</comment>
<comment type="catalytic activity">
    <reaction evidence="1">
        <text>UDP-4-amino-4-deoxy-beta-L-arabinose + (6R)-10-formyltetrahydrofolate = UDP-4-deoxy-4-formamido-beta-L-arabinose + (6S)-5,6,7,8-tetrahydrofolate + H(+)</text>
        <dbReference type="Rhea" id="RHEA:24706"/>
        <dbReference type="ChEBI" id="CHEBI:15378"/>
        <dbReference type="ChEBI" id="CHEBI:57453"/>
        <dbReference type="ChEBI" id="CHEBI:58708"/>
        <dbReference type="ChEBI" id="CHEBI:58709"/>
        <dbReference type="ChEBI" id="CHEBI:195366"/>
        <dbReference type="EC" id="2.1.2.13"/>
    </reaction>
</comment>
<comment type="pathway">
    <text evidence="1">Nucleotide-sugar biosynthesis; UDP-4-deoxy-4-formamido-beta-L-arabinose biosynthesis; UDP-4-deoxy-4-formamido-beta-L-arabinose from UDP-alpha-D-glucuronate: step 1/3.</text>
</comment>
<comment type="pathway">
    <text evidence="1">Nucleotide-sugar biosynthesis; UDP-4-deoxy-4-formamido-beta-L-arabinose biosynthesis; UDP-4-deoxy-4-formamido-beta-L-arabinose from UDP-alpha-D-glucuronate: step 3/3.</text>
</comment>
<comment type="pathway">
    <text evidence="1">Bacterial outer membrane biogenesis; lipopolysaccharide biosynthesis.</text>
</comment>
<comment type="subunit">
    <text evidence="1">Homohexamer, formed by a dimer of trimers.</text>
</comment>
<comment type="similarity">
    <text evidence="1">In the N-terminal section; belongs to the Fmt family. UDP-L-Ara4N formyltransferase subfamily.</text>
</comment>
<comment type="similarity">
    <text evidence="1">In the C-terminal section; belongs to the NAD(P)-dependent epimerase/dehydratase family. UDP-glucuronic acid decarboxylase subfamily.</text>
</comment>
<organism>
    <name type="scientific">Escherichia coli O139:H28 (strain E24377A / ETEC)</name>
    <dbReference type="NCBI Taxonomy" id="331111"/>
    <lineage>
        <taxon>Bacteria</taxon>
        <taxon>Pseudomonadati</taxon>
        <taxon>Pseudomonadota</taxon>
        <taxon>Gammaproteobacteria</taxon>
        <taxon>Enterobacterales</taxon>
        <taxon>Enterobacteriaceae</taxon>
        <taxon>Escherichia</taxon>
    </lineage>
</organism>
<feature type="chain" id="PRO_1000065674" description="Bifunctional polymyxin resistance protein ArnA">
    <location>
        <begin position="1"/>
        <end position="660"/>
    </location>
</feature>
<feature type="region of interest" description="Formyltransferase ArnAFT">
    <location>
        <begin position="1"/>
        <end position="304"/>
    </location>
</feature>
<feature type="region of interest" description="Dehydrogenase ArnADH">
    <location>
        <begin position="314"/>
        <end position="660"/>
    </location>
</feature>
<feature type="active site" description="Proton donor; for formyltransferase activity" evidence="1">
    <location>
        <position position="104"/>
    </location>
</feature>
<feature type="active site" description="Proton acceptor; for decarboxylase activity" evidence="1">
    <location>
        <position position="434"/>
    </location>
</feature>
<feature type="active site" description="Proton donor; for decarboxylase activity" evidence="1">
    <location>
        <position position="619"/>
    </location>
</feature>
<feature type="binding site" evidence="1">
    <location>
        <begin position="86"/>
        <end position="88"/>
    </location>
    <ligand>
        <name>(6R)-10-formyltetrahydrofolate</name>
        <dbReference type="ChEBI" id="CHEBI:195366"/>
    </ligand>
</feature>
<feature type="binding site" evidence="1">
    <location>
        <position position="114"/>
    </location>
    <ligand>
        <name>(6R)-10-formyltetrahydrofolate</name>
        <dbReference type="ChEBI" id="CHEBI:195366"/>
    </ligand>
</feature>
<feature type="binding site" evidence="1">
    <location>
        <begin position="136"/>
        <end position="140"/>
    </location>
    <ligand>
        <name>(6R)-10-formyltetrahydrofolate</name>
        <dbReference type="ChEBI" id="CHEBI:195366"/>
    </ligand>
</feature>
<feature type="binding site" evidence="1">
    <location>
        <position position="347"/>
    </location>
    <ligand>
        <name>NAD(+)</name>
        <dbReference type="ChEBI" id="CHEBI:57540"/>
    </ligand>
</feature>
<feature type="binding site" evidence="1">
    <location>
        <begin position="368"/>
        <end position="369"/>
    </location>
    <ligand>
        <name>NAD(+)</name>
        <dbReference type="ChEBI" id="CHEBI:57540"/>
    </ligand>
</feature>
<feature type="binding site" evidence="1">
    <location>
        <position position="393"/>
    </location>
    <ligand>
        <name>UDP-alpha-D-glucuronate</name>
        <dbReference type="ChEBI" id="CHEBI:58052"/>
    </ligand>
</feature>
<feature type="binding site" evidence="1">
    <location>
        <position position="398"/>
    </location>
    <ligand>
        <name>UDP-alpha-D-glucuronate</name>
        <dbReference type="ChEBI" id="CHEBI:58052"/>
    </ligand>
</feature>
<feature type="binding site" evidence="1">
    <location>
        <begin position="432"/>
        <end position="433"/>
    </location>
    <ligand>
        <name>UDP-alpha-D-glucuronate</name>
        <dbReference type="ChEBI" id="CHEBI:58052"/>
    </ligand>
</feature>
<feature type="binding site" evidence="1">
    <location>
        <position position="460"/>
    </location>
    <ligand>
        <name>UDP-alpha-D-glucuronate</name>
        <dbReference type="ChEBI" id="CHEBI:58052"/>
    </ligand>
</feature>
<feature type="binding site" evidence="1">
    <location>
        <position position="492"/>
    </location>
    <ligand>
        <name>UDP-alpha-D-glucuronate</name>
        <dbReference type="ChEBI" id="CHEBI:58052"/>
    </ligand>
</feature>
<feature type="binding site" evidence="1">
    <location>
        <begin position="526"/>
        <end position="535"/>
    </location>
    <ligand>
        <name>UDP-alpha-D-glucuronate</name>
        <dbReference type="ChEBI" id="CHEBI:58052"/>
    </ligand>
</feature>
<feature type="binding site" evidence="1">
    <location>
        <position position="613"/>
    </location>
    <ligand>
        <name>UDP-alpha-D-glucuronate</name>
        <dbReference type="ChEBI" id="CHEBI:58052"/>
    </ligand>
</feature>
<feature type="site" description="Transition state stabilizer" evidence="1">
    <location>
        <position position="102"/>
    </location>
</feature>
<feature type="site" description="Raises pKa of active site His" evidence="1">
    <location>
        <position position="140"/>
    </location>
</feature>
<accession>A7ZP73</accession>